<name>TAER_MYCTA</name>
<organism>
    <name type="scientific">Mycobacterium tuberculosis (strain ATCC 25177 / H37Ra)</name>
    <dbReference type="NCBI Taxonomy" id="419947"/>
    <lineage>
        <taxon>Bacteria</taxon>
        <taxon>Bacillati</taxon>
        <taxon>Actinomycetota</taxon>
        <taxon>Actinomycetes</taxon>
        <taxon>Mycobacteriales</taxon>
        <taxon>Mycobacteriaceae</taxon>
        <taxon>Mycobacterium</taxon>
        <taxon>Mycobacterium tuberculosis complex</taxon>
    </lineage>
</organism>
<feature type="chain" id="PRO_0000304695" description="Trans-acting enoyl reductase">
    <location>
        <begin position="1"/>
        <end position="418"/>
    </location>
</feature>
<keyword id="KW-0444">Lipid biosynthesis</keyword>
<keyword id="KW-0443">Lipid metabolism</keyword>
<keyword id="KW-0560">Oxidoreductase</keyword>
<keyword id="KW-1185">Reference proteome</keyword>
<reference key="1">
    <citation type="journal article" date="2008" name="PLoS ONE">
        <title>Genetic basis of virulence attenuation revealed by comparative genomic analysis of Mycobacterium tuberculosis strain H37Ra versus H37Rv.</title>
        <authorList>
            <person name="Zheng H."/>
            <person name="Lu L."/>
            <person name="Wang B."/>
            <person name="Pu S."/>
            <person name="Zhang X."/>
            <person name="Zhu G."/>
            <person name="Shi W."/>
            <person name="Zhang L."/>
            <person name="Wang H."/>
            <person name="Wang S."/>
            <person name="Zhao G."/>
            <person name="Zhang Y."/>
        </authorList>
    </citation>
    <scope>NUCLEOTIDE SEQUENCE [LARGE SCALE GENOMIC DNA]</scope>
    <source>
        <strain>ATCC 25177 / H37Ra</strain>
    </source>
</reference>
<dbReference type="EC" id="1.3.1.-"/>
<dbReference type="EMBL" id="CP000611">
    <property type="protein sequence ID" value="ABQ74761.1"/>
    <property type="molecule type" value="Genomic_DNA"/>
</dbReference>
<dbReference type="RefSeq" id="WP_003414903.1">
    <property type="nucleotide sequence ID" value="NZ_CP016972.1"/>
</dbReference>
<dbReference type="KEGG" id="mra:MRA_2980"/>
<dbReference type="eggNOG" id="COG3268">
    <property type="taxonomic scope" value="Bacteria"/>
</dbReference>
<dbReference type="HOGENOM" id="CLU_031002_0_2_11"/>
<dbReference type="Proteomes" id="UP000001988">
    <property type="component" value="Chromosome"/>
</dbReference>
<dbReference type="GO" id="GO:0005886">
    <property type="term" value="C:plasma membrane"/>
    <property type="evidence" value="ECO:0007669"/>
    <property type="project" value="TreeGrafter"/>
</dbReference>
<dbReference type="GO" id="GO:0016491">
    <property type="term" value="F:oxidoreductase activity"/>
    <property type="evidence" value="ECO:0007669"/>
    <property type="project" value="UniProtKB-KW"/>
</dbReference>
<dbReference type="GO" id="GO:0009247">
    <property type="term" value="P:glycolipid biosynthetic process"/>
    <property type="evidence" value="ECO:0007669"/>
    <property type="project" value="TreeGrafter"/>
</dbReference>
<dbReference type="FunFam" id="3.40.50.720:FF:000413">
    <property type="entry name" value="Trans-acting enoyl reductase"/>
    <property type="match status" value="1"/>
</dbReference>
<dbReference type="Gene3D" id="3.40.50.720">
    <property type="entry name" value="NAD(P)-binding Rossmann-like Domain"/>
    <property type="match status" value="1"/>
</dbReference>
<dbReference type="InterPro" id="IPR036291">
    <property type="entry name" value="NAD(P)-bd_dom_sf"/>
</dbReference>
<dbReference type="InterPro" id="IPR051276">
    <property type="entry name" value="Saccharopine_DH-like_oxidrdct"/>
</dbReference>
<dbReference type="InterPro" id="IPR005097">
    <property type="entry name" value="Sacchrp_dh_NADP-bd"/>
</dbReference>
<dbReference type="PANTHER" id="PTHR12286">
    <property type="entry name" value="SACCHAROPINE DEHYDROGENASE-LIKE OXIDOREDUCTASE"/>
    <property type="match status" value="1"/>
</dbReference>
<dbReference type="PANTHER" id="PTHR12286:SF5">
    <property type="entry name" value="SACCHAROPINE DEHYDROGENASE-LIKE OXIDOREDUCTASE"/>
    <property type="match status" value="1"/>
</dbReference>
<dbReference type="Pfam" id="PF03435">
    <property type="entry name" value="Sacchrp_dh_NADP"/>
    <property type="match status" value="1"/>
</dbReference>
<dbReference type="SUPFAM" id="SSF51735">
    <property type="entry name" value="NAD(P)-binding Rossmann-fold domains"/>
    <property type="match status" value="1"/>
</dbReference>
<evidence type="ECO:0000250" key="1"/>
<evidence type="ECO:0000305" key="2"/>
<gene>
    <name type="ordered locus">MRA_2980</name>
</gene>
<proteinExistence type="inferred from homology"/>
<comment type="function">
    <text evidence="1">Involved in the reduction of the double bond between C-4 and C-5 during phthiocerol dimycocerosates (DIM A) and glycosylated phenolphthiocerol dimycocerosates (PGL) biosynthesis.</text>
</comment>
<comment type="similarity">
    <text evidence="2">Belongs to the saccharopine dehydrogenase family. Enoyl reductase subfamily.</text>
</comment>
<protein>
    <recommendedName>
        <fullName>Trans-acting enoyl reductase</fullName>
        <ecNumber>1.3.1.-</ecNumber>
    </recommendedName>
</protein>
<sequence length="418" mass="45104">MSPAEREFDIVLYGATGFSGKLTAEHLAHSGSTARIALAGRSSERLRGVRMMLGPNAADWPLILADASQPLTLEAMAARAQVVLTTVGPYTRYGLPLVAACAKAGTDYADLTGELMFCRNSIDLYHKQAADTGARIILACGFDSIPSDLNVYQLYRRSVEDGTGELCDTDLVLRSFSQRWVSGGSVATYSEAMRTASSDPEARRLVTDPYTLTTDRGAEPELGAQPDFLRRPGRDLAPELAGFWTGGFVQAPFNTRIVRRSNALQEWAYGRRFRYSETMSLGKSMAAPILAAAVTGTVAGTIGLGNKYFDRLPRRLVERVTPKPGTGPSRKTQERGHYTFETYTTTTTGARYRATFAHNVDAYKSTAVLLAQSGLALALDRDRLAELRGVLTPAAAMGDALLARLPGAGVVMGTTRLS</sequence>
<accession>A5U6W1</accession>